<evidence type="ECO:0000255" key="1">
    <source>
        <dbReference type="HAMAP-Rule" id="MF_00593"/>
    </source>
</evidence>
<keyword id="KW-0067">ATP-binding</keyword>
<keyword id="KW-0963">Cytoplasm</keyword>
<keyword id="KW-0436">Ligase</keyword>
<keyword id="KW-0547">Nucleotide-binding</keyword>
<keyword id="KW-1185">Reference proteome</keyword>
<proteinExistence type="inferred from homology"/>
<feature type="chain" id="PRO_0000213143" description="D-alanine--D-alanyl carrier protein ligase">
    <location>
        <begin position="1"/>
        <end position="499"/>
    </location>
</feature>
<feature type="binding site" evidence="1">
    <location>
        <begin position="152"/>
        <end position="153"/>
    </location>
    <ligand>
        <name>ATP</name>
        <dbReference type="ChEBI" id="CHEBI:30616"/>
    </ligand>
</feature>
<feature type="binding site" evidence="1">
    <location>
        <position position="197"/>
    </location>
    <ligand>
        <name>D-alanine</name>
        <dbReference type="ChEBI" id="CHEBI:57416"/>
    </ligand>
</feature>
<feature type="binding site" evidence="1">
    <location>
        <begin position="292"/>
        <end position="297"/>
    </location>
    <ligand>
        <name>ATP</name>
        <dbReference type="ChEBI" id="CHEBI:30616"/>
    </ligand>
</feature>
<feature type="binding site" evidence="1">
    <location>
        <position position="372"/>
    </location>
    <ligand>
        <name>ATP</name>
        <dbReference type="ChEBI" id="CHEBI:30616"/>
    </ligand>
</feature>
<feature type="binding site" evidence="1">
    <location>
        <begin position="384"/>
        <end position="387"/>
    </location>
    <ligand>
        <name>ATP</name>
        <dbReference type="ChEBI" id="CHEBI:30616"/>
    </ligand>
</feature>
<feature type="binding site" evidence="1">
    <location>
        <position position="485"/>
    </location>
    <ligand>
        <name>ATP</name>
        <dbReference type="ChEBI" id="CHEBI:30616"/>
    </ligand>
</feature>
<feature type="binding site" evidence="1">
    <location>
        <position position="485"/>
    </location>
    <ligand>
        <name>D-alanine</name>
        <dbReference type="ChEBI" id="CHEBI:57416"/>
    </ligand>
</feature>
<reference key="1">
    <citation type="journal article" date="2001" name="Genome Res.">
        <title>The complete genome sequence of the lactic acid bacterium Lactococcus lactis ssp. lactis IL1403.</title>
        <authorList>
            <person name="Bolotin A."/>
            <person name="Wincker P."/>
            <person name="Mauger S."/>
            <person name="Jaillon O."/>
            <person name="Malarme K."/>
            <person name="Weissenbach J."/>
            <person name="Ehrlich S.D."/>
            <person name="Sorokin A."/>
        </authorList>
    </citation>
    <scope>NUCLEOTIDE SEQUENCE [LARGE SCALE GENOMIC DNA]</scope>
    <source>
        <strain>IL1403</strain>
    </source>
</reference>
<name>DLTA_LACLA</name>
<dbReference type="EC" id="6.2.1.54" evidence="1"/>
<dbReference type="EMBL" id="AE005176">
    <property type="protein sequence ID" value="AAK05359.1"/>
    <property type="molecule type" value="Genomic_DNA"/>
</dbReference>
<dbReference type="PIR" id="E86782">
    <property type="entry name" value="E86782"/>
</dbReference>
<dbReference type="RefSeq" id="NP_267417.1">
    <property type="nucleotide sequence ID" value="NC_002662.1"/>
</dbReference>
<dbReference type="RefSeq" id="WP_003130224.1">
    <property type="nucleotide sequence ID" value="NC_002662.1"/>
</dbReference>
<dbReference type="SMR" id="Q9CG49"/>
<dbReference type="PaxDb" id="272623-L91510"/>
<dbReference type="EnsemblBacteria" id="AAK05359">
    <property type="protein sequence ID" value="AAK05359"/>
    <property type="gene ID" value="L91510"/>
</dbReference>
<dbReference type="KEGG" id="lla:L91510"/>
<dbReference type="PATRIC" id="fig|272623.7.peg.1362"/>
<dbReference type="eggNOG" id="COG1020">
    <property type="taxonomic scope" value="Bacteria"/>
</dbReference>
<dbReference type="HOGENOM" id="CLU_000022_2_12_9"/>
<dbReference type="OrthoDB" id="9765680at2"/>
<dbReference type="UniPathway" id="UPA00556"/>
<dbReference type="Proteomes" id="UP000002196">
    <property type="component" value="Chromosome"/>
</dbReference>
<dbReference type="GO" id="GO:0005737">
    <property type="term" value="C:cytoplasm"/>
    <property type="evidence" value="ECO:0007669"/>
    <property type="project" value="UniProtKB-SubCell"/>
</dbReference>
<dbReference type="GO" id="GO:0005524">
    <property type="term" value="F:ATP binding"/>
    <property type="evidence" value="ECO:0007669"/>
    <property type="project" value="UniProtKB-KW"/>
</dbReference>
<dbReference type="GO" id="GO:0047473">
    <property type="term" value="F:D-alanine [D-alanyl carrier protein] ligase activity"/>
    <property type="evidence" value="ECO:0007669"/>
    <property type="project" value="UniProtKB-UniRule"/>
</dbReference>
<dbReference type="GO" id="GO:0070395">
    <property type="term" value="P:lipoteichoic acid biosynthetic process"/>
    <property type="evidence" value="ECO:0007669"/>
    <property type="project" value="UniProtKB-UniRule"/>
</dbReference>
<dbReference type="CDD" id="cd05945">
    <property type="entry name" value="DltA"/>
    <property type="match status" value="1"/>
</dbReference>
<dbReference type="FunFam" id="3.30.300.30:FF:000012">
    <property type="entry name" value="D-alanine--D-alanyl carrier protein ligase"/>
    <property type="match status" value="1"/>
</dbReference>
<dbReference type="Gene3D" id="3.30.300.30">
    <property type="match status" value="1"/>
</dbReference>
<dbReference type="Gene3D" id="3.40.50.12780">
    <property type="entry name" value="N-terminal domain of ligase-like"/>
    <property type="match status" value="1"/>
</dbReference>
<dbReference type="HAMAP" id="MF_00593">
    <property type="entry name" value="DltA"/>
    <property type="match status" value="1"/>
</dbReference>
<dbReference type="InterPro" id="IPR025110">
    <property type="entry name" value="AMP-bd_C"/>
</dbReference>
<dbReference type="InterPro" id="IPR045851">
    <property type="entry name" value="AMP-bd_C_sf"/>
</dbReference>
<dbReference type="InterPro" id="IPR020845">
    <property type="entry name" value="AMP-binding_CS"/>
</dbReference>
<dbReference type="InterPro" id="IPR000873">
    <property type="entry name" value="AMP-dep_synth/lig_dom"/>
</dbReference>
<dbReference type="InterPro" id="IPR042099">
    <property type="entry name" value="ANL_N_sf"/>
</dbReference>
<dbReference type="InterPro" id="IPR010072">
    <property type="entry name" value="DltA"/>
</dbReference>
<dbReference type="InterPro" id="IPR044507">
    <property type="entry name" value="DltA-like"/>
</dbReference>
<dbReference type="NCBIfam" id="TIGR01734">
    <property type="entry name" value="D-ala-DACP-lig"/>
    <property type="match status" value="1"/>
</dbReference>
<dbReference type="NCBIfam" id="NF003417">
    <property type="entry name" value="PRK04813.1"/>
    <property type="match status" value="1"/>
</dbReference>
<dbReference type="PANTHER" id="PTHR45398">
    <property type="match status" value="1"/>
</dbReference>
<dbReference type="PANTHER" id="PTHR45398:SF1">
    <property type="entry name" value="ENZYME, PUTATIVE (JCVI)-RELATED"/>
    <property type="match status" value="1"/>
</dbReference>
<dbReference type="Pfam" id="PF00501">
    <property type="entry name" value="AMP-binding"/>
    <property type="match status" value="1"/>
</dbReference>
<dbReference type="Pfam" id="PF13193">
    <property type="entry name" value="AMP-binding_C"/>
    <property type="match status" value="1"/>
</dbReference>
<dbReference type="SUPFAM" id="SSF56801">
    <property type="entry name" value="Acetyl-CoA synthetase-like"/>
    <property type="match status" value="1"/>
</dbReference>
<dbReference type="PROSITE" id="PS00455">
    <property type="entry name" value="AMP_BINDING"/>
    <property type="match status" value="1"/>
</dbReference>
<comment type="function">
    <text evidence="1">Catalyzes the first step in the D-alanylation of lipoteichoic acid (LTA), the activation of D-alanine and its transfer onto the D-alanyl carrier protein (Dcp) DltC. In an ATP-dependent two-step reaction, forms a high energy D-alanyl-AMP intermediate, followed by transfer of the D-alanyl residue as a thiol ester to the phosphopantheinyl prosthetic group of the Dcp. D-alanylation of LTA plays an important role in modulating the properties of the cell wall in Gram-positive bacteria, influencing the net charge of the cell wall.</text>
</comment>
<comment type="catalytic activity">
    <reaction evidence="1">
        <text>holo-[D-alanyl-carrier protein] + D-alanine + ATP = D-alanyl-[D-alanyl-carrier protein] + AMP + diphosphate</text>
        <dbReference type="Rhea" id="RHEA:55132"/>
        <dbReference type="Rhea" id="RHEA-COMP:14102"/>
        <dbReference type="Rhea" id="RHEA-COMP:14103"/>
        <dbReference type="ChEBI" id="CHEBI:30616"/>
        <dbReference type="ChEBI" id="CHEBI:33019"/>
        <dbReference type="ChEBI" id="CHEBI:57416"/>
        <dbReference type="ChEBI" id="CHEBI:64479"/>
        <dbReference type="ChEBI" id="CHEBI:138620"/>
        <dbReference type="ChEBI" id="CHEBI:456215"/>
        <dbReference type="EC" id="6.2.1.54"/>
    </reaction>
</comment>
<comment type="pathway">
    <text evidence="1">Cell wall biogenesis; lipoteichoic acid biosynthesis.</text>
</comment>
<comment type="subcellular location">
    <subcellularLocation>
        <location evidence="1">Cytoplasm</location>
    </subcellularLocation>
</comment>
<comment type="similarity">
    <text evidence="1">Belongs to the ATP-dependent AMP-binding enzyme family. DltA subfamily.</text>
</comment>
<accession>Q9CG49</accession>
<sequence>MKLLEQIFEIAKKEPDLIVLAEREQKFTYRQLFAAVSHISEQINERNLNQRPILIFGKNDFITLAAMLATNLRGHAYIPVDAHTPFERTEMIKSAAKPAAVLTTVELSADFEALFTDRISLELTDQILTDKLPALDFSKAVSGNDSNYIIYTSGTTGVPKGVEVSHDNLVTFTNWMNNDFMKIENNQILSQALYSFDLSIFSLYPSLTTGGTLISLSRDETTNFKLLFERLNKTVINTWISTPSFVDICLLDPSFTEKEHPQLVQFILCGEELTKKTAEKLLTAFPSANIYNTYGPTEATGAISSVKITKELLTENDRVPIGFAKPGVDLKIMDKEIIIVGDSVAKGYFENPEKTEQAFFTVDGKPAYHTGDAGSISADGMLRYQGRIDFQVKFNGFRIELQDIEANIQNLKEIEKAVVLPKTNDQHKVTALIAYLETEKTFEDRAAERAFTKELKAELSKTIMDYMMPTKFVYLKKFPLNQNGKVDRKALAQKERGDN</sequence>
<protein>
    <recommendedName>
        <fullName evidence="1">D-alanine--D-alanyl carrier protein ligase</fullName>
        <shortName evidence="1">DCL</shortName>
        <ecNumber evidence="1">6.2.1.54</ecNumber>
    </recommendedName>
    <alternativeName>
        <fullName evidence="1">D-alanine--poly(phosphoribitol) ligase subunit 1</fullName>
    </alternativeName>
    <alternativeName>
        <fullName evidence="1">D-alanine-activating enzyme</fullName>
        <shortName evidence="1">DAE</shortName>
    </alternativeName>
</protein>
<organism>
    <name type="scientific">Lactococcus lactis subsp. lactis (strain IL1403)</name>
    <name type="common">Streptococcus lactis</name>
    <dbReference type="NCBI Taxonomy" id="272623"/>
    <lineage>
        <taxon>Bacteria</taxon>
        <taxon>Bacillati</taxon>
        <taxon>Bacillota</taxon>
        <taxon>Bacilli</taxon>
        <taxon>Lactobacillales</taxon>
        <taxon>Streptococcaceae</taxon>
        <taxon>Lactococcus</taxon>
    </lineage>
</organism>
<gene>
    <name evidence="1" type="primary">dltA</name>
    <name type="ordered locus">LL1261</name>
    <name type="ORF">L91510</name>
</gene>